<sequence length="132" mass="15541">MSSQPNKNLKVFDNPNIERNFIIQINMPEFTCLCPKTGQPDFATLYLEYIADKVCIELKSLKMYIWSYRSKGEFHEAVTNKILDDLIQISNPRFMRLKAIFNVRGGIYTTIIAEYQQKNWTFKTKIDLQYQG</sequence>
<comment type="function">
    <text evidence="1">Catalyzes the NADPH-dependent reduction of 7-cyano-7-deazaguanine (preQ0) to 7-aminomethyl-7-deazaguanine (preQ1).</text>
</comment>
<comment type="catalytic activity">
    <reaction evidence="1">
        <text>7-aminomethyl-7-carbaguanine + 2 NADP(+) = 7-cyano-7-deazaguanine + 2 NADPH + 3 H(+)</text>
        <dbReference type="Rhea" id="RHEA:13409"/>
        <dbReference type="ChEBI" id="CHEBI:15378"/>
        <dbReference type="ChEBI" id="CHEBI:45075"/>
        <dbReference type="ChEBI" id="CHEBI:57783"/>
        <dbReference type="ChEBI" id="CHEBI:58349"/>
        <dbReference type="ChEBI" id="CHEBI:58703"/>
        <dbReference type="EC" id="1.7.1.13"/>
    </reaction>
</comment>
<comment type="pathway">
    <text evidence="1">tRNA modification; tRNA-queuosine biosynthesis.</text>
</comment>
<comment type="subcellular location">
    <subcellularLocation>
        <location evidence="1">Cytoplasm</location>
    </subcellularLocation>
</comment>
<comment type="similarity">
    <text evidence="1">Belongs to the GTP cyclohydrolase I family. QueF type 1 subfamily.</text>
</comment>
<name>QUEF_VESOH</name>
<dbReference type="EC" id="1.7.1.13" evidence="1"/>
<dbReference type="EMBL" id="AP009247">
    <property type="protein sequence ID" value="BAF61561.1"/>
    <property type="molecule type" value="Genomic_DNA"/>
</dbReference>
<dbReference type="RefSeq" id="WP_011929831.1">
    <property type="nucleotide sequence ID" value="NC_009465.1"/>
</dbReference>
<dbReference type="SMR" id="A5CWU3"/>
<dbReference type="STRING" id="412965.COSY_0442"/>
<dbReference type="KEGG" id="vok:COSY_0442"/>
<dbReference type="eggNOG" id="COG0780">
    <property type="taxonomic scope" value="Bacteria"/>
</dbReference>
<dbReference type="HOGENOM" id="CLU_102489_1_0_6"/>
<dbReference type="OrthoDB" id="9789995at2"/>
<dbReference type="UniPathway" id="UPA00392"/>
<dbReference type="Proteomes" id="UP000000247">
    <property type="component" value="Chromosome"/>
</dbReference>
<dbReference type="GO" id="GO:0005737">
    <property type="term" value="C:cytoplasm"/>
    <property type="evidence" value="ECO:0007669"/>
    <property type="project" value="UniProtKB-SubCell"/>
</dbReference>
<dbReference type="GO" id="GO:0033739">
    <property type="term" value="F:preQ1 synthase activity"/>
    <property type="evidence" value="ECO:0007669"/>
    <property type="project" value="UniProtKB-UniRule"/>
</dbReference>
<dbReference type="GO" id="GO:0008616">
    <property type="term" value="P:queuosine biosynthetic process"/>
    <property type="evidence" value="ECO:0007669"/>
    <property type="project" value="UniProtKB-UniRule"/>
</dbReference>
<dbReference type="GO" id="GO:0006400">
    <property type="term" value="P:tRNA modification"/>
    <property type="evidence" value="ECO:0007669"/>
    <property type="project" value="UniProtKB-UniRule"/>
</dbReference>
<dbReference type="Gene3D" id="3.30.1130.10">
    <property type="match status" value="1"/>
</dbReference>
<dbReference type="HAMAP" id="MF_00818">
    <property type="entry name" value="QueF_type1"/>
    <property type="match status" value="1"/>
</dbReference>
<dbReference type="InterPro" id="IPR043133">
    <property type="entry name" value="GTP-CH-I_C/QueF"/>
</dbReference>
<dbReference type="InterPro" id="IPR050084">
    <property type="entry name" value="NADPH_dep_7-cyano-7-deazaG_red"/>
</dbReference>
<dbReference type="InterPro" id="IPR029500">
    <property type="entry name" value="QueF"/>
</dbReference>
<dbReference type="InterPro" id="IPR016856">
    <property type="entry name" value="QueF_type1"/>
</dbReference>
<dbReference type="NCBIfam" id="TIGR03139">
    <property type="entry name" value="QueF-II"/>
    <property type="match status" value="1"/>
</dbReference>
<dbReference type="PANTHER" id="PTHR34354">
    <property type="entry name" value="NADPH-DEPENDENT 7-CYANO-7-DEAZAGUANINE REDUCTASE"/>
    <property type="match status" value="1"/>
</dbReference>
<dbReference type="PANTHER" id="PTHR34354:SF1">
    <property type="entry name" value="NADPH-DEPENDENT 7-CYANO-7-DEAZAGUANINE REDUCTASE"/>
    <property type="match status" value="1"/>
</dbReference>
<dbReference type="Pfam" id="PF14489">
    <property type="entry name" value="QueF"/>
    <property type="match status" value="1"/>
</dbReference>
<dbReference type="PIRSF" id="PIRSF027377">
    <property type="entry name" value="Nitrile_oxidored_QueF"/>
    <property type="match status" value="1"/>
</dbReference>
<dbReference type="SUPFAM" id="SSF55620">
    <property type="entry name" value="Tetrahydrobiopterin biosynthesis enzymes-like"/>
    <property type="match status" value="1"/>
</dbReference>
<organism>
    <name type="scientific">Vesicomyosocius okutanii subsp. Calyptogena okutanii (strain HA)</name>
    <dbReference type="NCBI Taxonomy" id="412965"/>
    <lineage>
        <taxon>Bacteria</taxon>
        <taxon>Pseudomonadati</taxon>
        <taxon>Pseudomonadota</taxon>
        <taxon>Gammaproteobacteria</taxon>
        <taxon>Candidatus Pseudothioglobaceae</taxon>
        <taxon>Candidatus Vesicomyosocius</taxon>
    </lineage>
</organism>
<accession>A5CWU3</accession>
<evidence type="ECO:0000255" key="1">
    <source>
        <dbReference type="HAMAP-Rule" id="MF_00818"/>
    </source>
</evidence>
<keyword id="KW-0963">Cytoplasm</keyword>
<keyword id="KW-0521">NADP</keyword>
<keyword id="KW-0560">Oxidoreductase</keyword>
<keyword id="KW-0671">Queuosine biosynthesis</keyword>
<keyword id="KW-1185">Reference proteome</keyword>
<protein>
    <recommendedName>
        <fullName evidence="1">NADPH-dependent 7-cyano-7-deazaguanine reductase</fullName>
        <ecNumber evidence="1">1.7.1.13</ecNumber>
    </recommendedName>
    <alternativeName>
        <fullName evidence="1">7-cyano-7-carbaguanine reductase</fullName>
    </alternativeName>
    <alternativeName>
        <fullName evidence="1">NADPH-dependent nitrile oxidoreductase</fullName>
    </alternativeName>
    <alternativeName>
        <fullName evidence="1">PreQ(0) reductase</fullName>
    </alternativeName>
</protein>
<gene>
    <name evidence="1" type="primary">queF</name>
    <name type="ordered locus">COSY_0442</name>
</gene>
<proteinExistence type="inferred from homology"/>
<reference key="1">
    <citation type="journal article" date="2007" name="Curr. Biol.">
        <title>Reduced genome of the thioautotrophic intracellular symbiont in a deep-sea clam, Calyptogena okutanii.</title>
        <authorList>
            <person name="Kuwahara H."/>
            <person name="Yoshida T."/>
            <person name="Takaki Y."/>
            <person name="Shimamura S."/>
            <person name="Nishi S."/>
            <person name="Harada M."/>
            <person name="Matsuyama K."/>
            <person name="Takishita K."/>
            <person name="Kawato M."/>
            <person name="Uematsu K."/>
            <person name="Fujiwara Y."/>
            <person name="Sato T."/>
            <person name="Kato C."/>
            <person name="Kitagawa M."/>
            <person name="Kato I."/>
            <person name="Maruyama T."/>
        </authorList>
    </citation>
    <scope>NUCLEOTIDE SEQUENCE [LARGE SCALE GENOMIC DNA]</scope>
    <source>
        <strain>HA</strain>
    </source>
</reference>
<feature type="chain" id="PRO_1000062415" description="NADPH-dependent 7-cyano-7-deazaguanine reductase">
    <location>
        <begin position="1"/>
        <end position="132"/>
    </location>
</feature>
<feature type="active site" description="Thioimide intermediate" evidence="1">
    <location>
        <position position="34"/>
    </location>
</feature>
<feature type="active site" description="Proton donor" evidence="1">
    <location>
        <position position="41"/>
    </location>
</feature>
<feature type="binding site" evidence="1">
    <location>
        <begin position="56"/>
        <end position="58"/>
    </location>
    <ligand>
        <name>substrate</name>
    </ligand>
</feature>
<feature type="binding site" evidence="1">
    <location>
        <begin position="75"/>
        <end position="76"/>
    </location>
    <ligand>
        <name>substrate</name>
    </ligand>
</feature>